<reference key="1">
    <citation type="journal article" date="2016" name="Stand. Genomic Sci.">
        <title>Complete genome sequence of Methanospirillum hungatei type strain JF1.</title>
        <authorList>
            <person name="Gunsalus R.P."/>
            <person name="Cook L.E."/>
            <person name="Crable B."/>
            <person name="Rohlin L."/>
            <person name="McDonald E."/>
            <person name="Mouttaki H."/>
            <person name="Sieber J.R."/>
            <person name="Poweleit N."/>
            <person name="Zhou H."/>
            <person name="Lapidus A.L."/>
            <person name="Daligault H.E."/>
            <person name="Land M."/>
            <person name="Gilna P."/>
            <person name="Ivanova N."/>
            <person name="Kyrpides N."/>
            <person name="Culley D.E."/>
            <person name="McInerney M.J."/>
        </authorList>
    </citation>
    <scope>NUCLEOTIDE SEQUENCE [LARGE SCALE GENOMIC DNA]</scope>
    <source>
        <strain>ATCC 27890 / DSM 864 / NBRC 100397 / JF-1</strain>
    </source>
</reference>
<sequence length="430" mass="48144">MRVPINTITPDTPSAEVIGWAHEIRDLGGLAFLLIRDRTGIIQVTVPKKKVAPEIAETIRAISRESVVRVTGTVKPEGKAPGGRELIPDAIEIVSLSATPLPLDVAEKVPAELDTRLDNRFLDARRPRVSAIFKIRNAVQHATRNFFFENGFIEINTSKIVAAATEGGTELFPIAYFEKEAFLNQSPQLYKQMMMAAGFEKVYEIGPIFRAEEHNTTKHLNEATSIDIEVSFTDHLGVMQTLEDLIRDIYQFVDKTCSDAIADLGLDDFAVPEKGFPRLPYSEAIEIASATCEEDIAYGDDIGTAAERAIGEEMGRLYFIVDWPSSIRPYYAMPYENDPEICKAFDMMHPRMELSSGAQRVHQHDLLVEQIAKKGLNPENFEFYLNPFRFGMPPHAGWGLGAERLVTTMLGLPNVREAVLFPRDRHRVVP</sequence>
<keyword id="KW-0030">Aminoacyl-tRNA synthetase</keyword>
<keyword id="KW-0067">ATP-binding</keyword>
<keyword id="KW-0963">Cytoplasm</keyword>
<keyword id="KW-0436">Ligase</keyword>
<keyword id="KW-0460">Magnesium</keyword>
<keyword id="KW-0479">Metal-binding</keyword>
<keyword id="KW-0547">Nucleotide-binding</keyword>
<keyword id="KW-0648">Protein biosynthesis</keyword>
<keyword id="KW-1185">Reference proteome</keyword>
<name>SYDND_METHJ</name>
<dbReference type="EC" id="6.1.1.23" evidence="1"/>
<dbReference type="EMBL" id="CP000254">
    <property type="protein sequence ID" value="ABD42147.1"/>
    <property type="molecule type" value="Genomic_DNA"/>
</dbReference>
<dbReference type="RefSeq" id="WP_011449405.1">
    <property type="nucleotide sequence ID" value="NC_007796.1"/>
</dbReference>
<dbReference type="SMR" id="Q2FRU5"/>
<dbReference type="FunCoup" id="Q2FRU5">
    <property type="interactions" value="238"/>
</dbReference>
<dbReference type="STRING" id="323259.Mhun_2446"/>
<dbReference type="EnsemblBacteria" id="ABD42147">
    <property type="protein sequence ID" value="ABD42147"/>
    <property type="gene ID" value="Mhun_2446"/>
</dbReference>
<dbReference type="GeneID" id="3922434"/>
<dbReference type="KEGG" id="mhu:Mhun_2446"/>
<dbReference type="eggNOG" id="arCOG00406">
    <property type="taxonomic scope" value="Archaea"/>
</dbReference>
<dbReference type="HOGENOM" id="CLU_004553_2_1_2"/>
<dbReference type="InParanoid" id="Q2FRU5"/>
<dbReference type="OrthoDB" id="5908at2157"/>
<dbReference type="Proteomes" id="UP000001941">
    <property type="component" value="Chromosome"/>
</dbReference>
<dbReference type="GO" id="GO:0017101">
    <property type="term" value="C:aminoacyl-tRNA synthetase multienzyme complex"/>
    <property type="evidence" value="ECO:0007669"/>
    <property type="project" value="TreeGrafter"/>
</dbReference>
<dbReference type="GO" id="GO:0005829">
    <property type="term" value="C:cytosol"/>
    <property type="evidence" value="ECO:0007669"/>
    <property type="project" value="TreeGrafter"/>
</dbReference>
<dbReference type="GO" id="GO:0004815">
    <property type="term" value="F:aspartate-tRNA ligase activity"/>
    <property type="evidence" value="ECO:0007669"/>
    <property type="project" value="UniProtKB-UniRule"/>
</dbReference>
<dbReference type="GO" id="GO:0050560">
    <property type="term" value="F:aspartate-tRNA(Asn) ligase activity"/>
    <property type="evidence" value="ECO:0007669"/>
    <property type="project" value="UniProtKB-EC"/>
</dbReference>
<dbReference type="GO" id="GO:0005524">
    <property type="term" value="F:ATP binding"/>
    <property type="evidence" value="ECO:0007669"/>
    <property type="project" value="UniProtKB-UniRule"/>
</dbReference>
<dbReference type="GO" id="GO:0000287">
    <property type="term" value="F:magnesium ion binding"/>
    <property type="evidence" value="ECO:0007669"/>
    <property type="project" value="UniProtKB-UniRule"/>
</dbReference>
<dbReference type="GO" id="GO:0003723">
    <property type="term" value="F:RNA binding"/>
    <property type="evidence" value="ECO:0007669"/>
    <property type="project" value="TreeGrafter"/>
</dbReference>
<dbReference type="GO" id="GO:0006422">
    <property type="term" value="P:aspartyl-tRNA aminoacylation"/>
    <property type="evidence" value="ECO:0007669"/>
    <property type="project" value="UniProtKB-UniRule"/>
</dbReference>
<dbReference type="CDD" id="cd00776">
    <property type="entry name" value="AsxRS_core"/>
    <property type="match status" value="1"/>
</dbReference>
<dbReference type="FunFam" id="3.30.930.10:FF:000038">
    <property type="entry name" value="Aspartate--tRNA ligase"/>
    <property type="match status" value="1"/>
</dbReference>
<dbReference type="Gene3D" id="3.30.930.10">
    <property type="entry name" value="Bira Bifunctional Protein, Domain 2"/>
    <property type="match status" value="1"/>
</dbReference>
<dbReference type="Gene3D" id="2.40.50.140">
    <property type="entry name" value="Nucleic acid-binding proteins"/>
    <property type="match status" value="1"/>
</dbReference>
<dbReference type="HAMAP" id="MF_02075">
    <property type="entry name" value="Asp_tRNA_synth_type2"/>
    <property type="match status" value="1"/>
</dbReference>
<dbReference type="InterPro" id="IPR004364">
    <property type="entry name" value="Aa-tRNA-synt_II"/>
</dbReference>
<dbReference type="InterPro" id="IPR006195">
    <property type="entry name" value="aa-tRNA-synth_II"/>
</dbReference>
<dbReference type="InterPro" id="IPR045864">
    <property type="entry name" value="aa-tRNA-synth_II/BPL/LPL"/>
</dbReference>
<dbReference type="InterPro" id="IPR004523">
    <property type="entry name" value="Asp-tRNA_synthase_2"/>
</dbReference>
<dbReference type="InterPro" id="IPR002312">
    <property type="entry name" value="Asp/Asn-tRNA-synth_IIb"/>
</dbReference>
<dbReference type="InterPro" id="IPR012340">
    <property type="entry name" value="NA-bd_OB-fold"/>
</dbReference>
<dbReference type="InterPro" id="IPR004365">
    <property type="entry name" value="NA-bd_OB_tRNA"/>
</dbReference>
<dbReference type="NCBIfam" id="TIGR00458">
    <property type="entry name" value="aspS_nondisc"/>
    <property type="match status" value="1"/>
</dbReference>
<dbReference type="NCBIfam" id="NF003483">
    <property type="entry name" value="PRK05159.1"/>
    <property type="match status" value="1"/>
</dbReference>
<dbReference type="PANTHER" id="PTHR43450:SF1">
    <property type="entry name" value="ASPARTATE--TRNA LIGASE, CYTOPLASMIC"/>
    <property type="match status" value="1"/>
</dbReference>
<dbReference type="PANTHER" id="PTHR43450">
    <property type="entry name" value="ASPARTYL-TRNA SYNTHETASE"/>
    <property type="match status" value="1"/>
</dbReference>
<dbReference type="Pfam" id="PF00152">
    <property type="entry name" value="tRNA-synt_2"/>
    <property type="match status" value="1"/>
</dbReference>
<dbReference type="Pfam" id="PF01336">
    <property type="entry name" value="tRNA_anti-codon"/>
    <property type="match status" value="1"/>
</dbReference>
<dbReference type="PRINTS" id="PR01042">
    <property type="entry name" value="TRNASYNTHASP"/>
</dbReference>
<dbReference type="SUPFAM" id="SSF55681">
    <property type="entry name" value="Class II aaRS and biotin synthetases"/>
    <property type="match status" value="1"/>
</dbReference>
<dbReference type="SUPFAM" id="SSF50249">
    <property type="entry name" value="Nucleic acid-binding proteins"/>
    <property type="match status" value="1"/>
</dbReference>
<dbReference type="PROSITE" id="PS50862">
    <property type="entry name" value="AA_TRNA_LIGASE_II"/>
    <property type="match status" value="1"/>
</dbReference>
<organism>
    <name type="scientific">Methanospirillum hungatei JF-1 (strain ATCC 27890 / DSM 864 / NBRC 100397 / JF-1)</name>
    <dbReference type="NCBI Taxonomy" id="323259"/>
    <lineage>
        <taxon>Archaea</taxon>
        <taxon>Methanobacteriati</taxon>
        <taxon>Methanobacteriota</taxon>
        <taxon>Stenosarchaea group</taxon>
        <taxon>Methanomicrobia</taxon>
        <taxon>Methanomicrobiales</taxon>
        <taxon>Methanospirillaceae</taxon>
        <taxon>Methanospirillum</taxon>
    </lineage>
</organism>
<protein>
    <recommendedName>
        <fullName evidence="1">Aspartate--tRNA(Asp/Asn) ligase</fullName>
        <ecNumber evidence="1">6.1.1.23</ecNumber>
    </recommendedName>
    <alternativeName>
        <fullName evidence="1">Aspartyl-tRNA synthetase</fullName>
        <shortName evidence="1">AspRS</shortName>
    </alternativeName>
    <alternativeName>
        <fullName evidence="1">Non-discriminating aspartyl-tRNA synthetase</fullName>
        <shortName evidence="1">ND-AspRS</shortName>
    </alternativeName>
</protein>
<feature type="chain" id="PRO_0000235585" description="Aspartate--tRNA(Asp/Asn) ligase">
    <location>
        <begin position="1"/>
        <end position="430"/>
    </location>
</feature>
<feature type="region of interest" description="Aspartate" evidence="1">
    <location>
        <begin position="188"/>
        <end position="191"/>
    </location>
</feature>
<feature type="binding site" evidence="1">
    <location>
        <position position="166"/>
    </location>
    <ligand>
        <name>L-aspartate</name>
        <dbReference type="ChEBI" id="CHEBI:29991"/>
    </ligand>
</feature>
<feature type="binding site" evidence="1">
    <location>
        <begin position="210"/>
        <end position="212"/>
    </location>
    <ligand>
        <name>ATP</name>
        <dbReference type="ChEBI" id="CHEBI:30616"/>
    </ligand>
</feature>
<feature type="binding site" evidence="1">
    <location>
        <position position="210"/>
    </location>
    <ligand>
        <name>L-aspartate</name>
        <dbReference type="ChEBI" id="CHEBI:29991"/>
    </ligand>
</feature>
<feature type="binding site" evidence="1">
    <location>
        <begin position="218"/>
        <end position="220"/>
    </location>
    <ligand>
        <name>ATP</name>
        <dbReference type="ChEBI" id="CHEBI:30616"/>
    </ligand>
</feature>
<feature type="binding site" evidence="1">
    <location>
        <position position="353"/>
    </location>
    <ligand>
        <name>ATP</name>
        <dbReference type="ChEBI" id="CHEBI:30616"/>
    </ligand>
</feature>
<feature type="binding site" evidence="1">
    <location>
        <position position="353"/>
    </location>
    <ligand>
        <name>Mg(2+)</name>
        <dbReference type="ChEBI" id="CHEBI:18420"/>
        <label>2</label>
    </ligand>
</feature>
<feature type="binding site" evidence="1">
    <location>
        <position position="353"/>
    </location>
    <ligand>
        <name>Mg(2+)</name>
        <dbReference type="ChEBI" id="CHEBI:18420"/>
        <label>3</label>
    </ligand>
</feature>
<feature type="binding site" evidence="1">
    <location>
        <position position="356"/>
    </location>
    <ligand>
        <name>L-aspartate</name>
        <dbReference type="ChEBI" id="CHEBI:29991"/>
    </ligand>
</feature>
<feature type="binding site" evidence="1">
    <location>
        <position position="356"/>
    </location>
    <ligand>
        <name>Mg(2+)</name>
        <dbReference type="ChEBI" id="CHEBI:18420"/>
        <label>2</label>
    </ligand>
</feature>
<feature type="binding site" evidence="1">
    <location>
        <position position="360"/>
    </location>
    <ligand>
        <name>L-aspartate</name>
        <dbReference type="ChEBI" id="CHEBI:29991"/>
    </ligand>
</feature>
<feature type="binding site" evidence="1">
    <location>
        <begin position="401"/>
        <end position="404"/>
    </location>
    <ligand>
        <name>ATP</name>
        <dbReference type="ChEBI" id="CHEBI:30616"/>
    </ligand>
</feature>
<feature type="site" description="Important for tRNA non-discrimination" evidence="1">
    <location>
        <position position="81"/>
    </location>
</feature>
<comment type="function">
    <text evidence="1">Aspartyl-tRNA synthetase with relaxed tRNA specificity since it is able to aspartylate not only its cognate tRNA(Asp) but also tRNA(Asn). Reaction proceeds in two steps: L-aspartate is first activated by ATP to form Asp-AMP and then transferred to the acceptor end of tRNA(Asp/Asn).</text>
</comment>
<comment type="catalytic activity">
    <reaction evidence="1">
        <text>tRNA(Asx) + L-aspartate + ATP = L-aspartyl-tRNA(Asx) + AMP + diphosphate</text>
        <dbReference type="Rhea" id="RHEA:18349"/>
        <dbReference type="Rhea" id="RHEA-COMP:9710"/>
        <dbReference type="Rhea" id="RHEA-COMP:9711"/>
        <dbReference type="ChEBI" id="CHEBI:29991"/>
        <dbReference type="ChEBI" id="CHEBI:30616"/>
        <dbReference type="ChEBI" id="CHEBI:33019"/>
        <dbReference type="ChEBI" id="CHEBI:78442"/>
        <dbReference type="ChEBI" id="CHEBI:78516"/>
        <dbReference type="ChEBI" id="CHEBI:456215"/>
        <dbReference type="EC" id="6.1.1.23"/>
    </reaction>
</comment>
<comment type="cofactor">
    <cofactor evidence="1">
        <name>Mg(2+)</name>
        <dbReference type="ChEBI" id="CHEBI:18420"/>
    </cofactor>
    <text evidence="1">Binds 3 Mg(2+) cations per subunit. The strongest magnesium site (Mg1) is bound to the beta- and gamma-phosphates of ATP and four water molecules complete its coordination sphere.</text>
</comment>
<comment type="subunit">
    <text evidence="1">Homodimer.</text>
</comment>
<comment type="subcellular location">
    <subcellularLocation>
        <location evidence="1">Cytoplasm</location>
    </subcellularLocation>
</comment>
<comment type="similarity">
    <text evidence="1">Belongs to the class-II aminoacyl-tRNA synthetase family. Type 2 subfamily.</text>
</comment>
<evidence type="ECO:0000255" key="1">
    <source>
        <dbReference type="HAMAP-Rule" id="MF_02075"/>
    </source>
</evidence>
<accession>Q2FRU5</accession>
<proteinExistence type="inferred from homology"/>
<gene>
    <name evidence="1" type="primary">aspS</name>
    <name type="ordered locus">Mhun_2446</name>
</gene>